<protein>
    <recommendedName>
        <fullName evidence="1">Succinate--CoA ligase [ADP-forming] subunit beta</fullName>
        <ecNumber evidence="1">6.2.1.5</ecNumber>
    </recommendedName>
    <alternativeName>
        <fullName evidence="1">Succinyl-CoA synthetase subunit beta</fullName>
        <shortName evidence="1">SCS-beta</shortName>
    </alternativeName>
</protein>
<gene>
    <name evidence="1" type="primary">sucC</name>
    <name type="ordered locus">FP0908</name>
</gene>
<proteinExistence type="inferred from homology"/>
<accession>A6GY30</accession>
<comment type="function">
    <text evidence="1">Succinyl-CoA synthetase functions in the citric acid cycle (TCA), coupling the hydrolysis of succinyl-CoA to the synthesis of either ATP or GTP and thus represents the only step of substrate-level phosphorylation in the TCA. The beta subunit provides nucleotide specificity of the enzyme and binds the substrate succinate, while the binding sites for coenzyme A and phosphate are found in the alpha subunit.</text>
</comment>
<comment type="catalytic activity">
    <reaction evidence="1">
        <text>succinate + ATP + CoA = succinyl-CoA + ADP + phosphate</text>
        <dbReference type="Rhea" id="RHEA:17661"/>
        <dbReference type="ChEBI" id="CHEBI:30031"/>
        <dbReference type="ChEBI" id="CHEBI:30616"/>
        <dbReference type="ChEBI" id="CHEBI:43474"/>
        <dbReference type="ChEBI" id="CHEBI:57287"/>
        <dbReference type="ChEBI" id="CHEBI:57292"/>
        <dbReference type="ChEBI" id="CHEBI:456216"/>
        <dbReference type="EC" id="6.2.1.5"/>
    </reaction>
    <physiologicalReaction direction="right-to-left" evidence="1">
        <dbReference type="Rhea" id="RHEA:17663"/>
    </physiologicalReaction>
</comment>
<comment type="catalytic activity">
    <reaction evidence="1">
        <text>GTP + succinate + CoA = succinyl-CoA + GDP + phosphate</text>
        <dbReference type="Rhea" id="RHEA:22120"/>
        <dbReference type="ChEBI" id="CHEBI:30031"/>
        <dbReference type="ChEBI" id="CHEBI:37565"/>
        <dbReference type="ChEBI" id="CHEBI:43474"/>
        <dbReference type="ChEBI" id="CHEBI:57287"/>
        <dbReference type="ChEBI" id="CHEBI:57292"/>
        <dbReference type="ChEBI" id="CHEBI:58189"/>
    </reaction>
    <physiologicalReaction direction="right-to-left" evidence="1">
        <dbReference type="Rhea" id="RHEA:22122"/>
    </physiologicalReaction>
</comment>
<comment type="cofactor">
    <cofactor evidence="1">
        <name>Mg(2+)</name>
        <dbReference type="ChEBI" id="CHEBI:18420"/>
    </cofactor>
    <text evidence="1">Binds 1 Mg(2+) ion per subunit.</text>
</comment>
<comment type="pathway">
    <text evidence="1">Carbohydrate metabolism; tricarboxylic acid cycle; succinate from succinyl-CoA (ligase route): step 1/1.</text>
</comment>
<comment type="subunit">
    <text evidence="1">Heterotetramer of two alpha and two beta subunits.</text>
</comment>
<comment type="similarity">
    <text evidence="1">Belongs to the succinate/malate CoA ligase beta subunit family.</text>
</comment>
<reference key="1">
    <citation type="journal article" date="2007" name="Nat. Biotechnol.">
        <title>Complete genome sequence of the fish pathogen Flavobacterium psychrophilum.</title>
        <authorList>
            <person name="Duchaud E."/>
            <person name="Boussaha M."/>
            <person name="Loux V."/>
            <person name="Bernardet J.-F."/>
            <person name="Michel C."/>
            <person name="Kerouault B."/>
            <person name="Mondot S."/>
            <person name="Nicolas P."/>
            <person name="Bossy R."/>
            <person name="Caron C."/>
            <person name="Bessieres P."/>
            <person name="Gibrat J.-F."/>
            <person name="Claverol S."/>
            <person name="Dumetz F."/>
            <person name="Le Henaff M."/>
            <person name="Benmansour A."/>
        </authorList>
    </citation>
    <scope>NUCLEOTIDE SEQUENCE [LARGE SCALE GENOMIC DNA]</scope>
    <source>
        <strain>ATCC 49511 / DSM 21280 / CIP 103535 / JIP02/86</strain>
    </source>
</reference>
<dbReference type="EC" id="6.2.1.5" evidence="1"/>
<dbReference type="EMBL" id="AM398681">
    <property type="protein sequence ID" value="CAL43003.1"/>
    <property type="molecule type" value="Genomic_DNA"/>
</dbReference>
<dbReference type="RefSeq" id="WP_011963059.1">
    <property type="nucleotide sequence ID" value="NC_009613.3"/>
</dbReference>
<dbReference type="RefSeq" id="YP_001295819.1">
    <property type="nucleotide sequence ID" value="NC_009613.3"/>
</dbReference>
<dbReference type="SMR" id="A6GY30"/>
<dbReference type="STRING" id="402612.FP0908"/>
<dbReference type="EnsemblBacteria" id="CAL43003">
    <property type="protein sequence ID" value="CAL43003"/>
    <property type="gene ID" value="FP0908"/>
</dbReference>
<dbReference type="GeneID" id="66552307"/>
<dbReference type="KEGG" id="fps:FP0908"/>
<dbReference type="PATRIC" id="fig|402612.5.peg.921"/>
<dbReference type="eggNOG" id="COG0045">
    <property type="taxonomic scope" value="Bacteria"/>
</dbReference>
<dbReference type="HOGENOM" id="CLU_037430_0_0_10"/>
<dbReference type="OrthoDB" id="9802602at2"/>
<dbReference type="UniPathway" id="UPA00223">
    <property type="reaction ID" value="UER00999"/>
</dbReference>
<dbReference type="Proteomes" id="UP000006394">
    <property type="component" value="Chromosome"/>
</dbReference>
<dbReference type="GO" id="GO:0005829">
    <property type="term" value="C:cytosol"/>
    <property type="evidence" value="ECO:0007669"/>
    <property type="project" value="TreeGrafter"/>
</dbReference>
<dbReference type="GO" id="GO:0042709">
    <property type="term" value="C:succinate-CoA ligase complex"/>
    <property type="evidence" value="ECO:0007669"/>
    <property type="project" value="TreeGrafter"/>
</dbReference>
<dbReference type="GO" id="GO:0005524">
    <property type="term" value="F:ATP binding"/>
    <property type="evidence" value="ECO:0007669"/>
    <property type="project" value="UniProtKB-UniRule"/>
</dbReference>
<dbReference type="GO" id="GO:0000287">
    <property type="term" value="F:magnesium ion binding"/>
    <property type="evidence" value="ECO:0007669"/>
    <property type="project" value="UniProtKB-UniRule"/>
</dbReference>
<dbReference type="GO" id="GO:0004775">
    <property type="term" value="F:succinate-CoA ligase (ADP-forming) activity"/>
    <property type="evidence" value="ECO:0007669"/>
    <property type="project" value="UniProtKB-UniRule"/>
</dbReference>
<dbReference type="GO" id="GO:0004776">
    <property type="term" value="F:succinate-CoA ligase (GDP-forming) activity"/>
    <property type="evidence" value="ECO:0007669"/>
    <property type="project" value="RHEA"/>
</dbReference>
<dbReference type="GO" id="GO:0006104">
    <property type="term" value="P:succinyl-CoA metabolic process"/>
    <property type="evidence" value="ECO:0007669"/>
    <property type="project" value="TreeGrafter"/>
</dbReference>
<dbReference type="GO" id="GO:0006099">
    <property type="term" value="P:tricarboxylic acid cycle"/>
    <property type="evidence" value="ECO:0007669"/>
    <property type="project" value="UniProtKB-UniRule"/>
</dbReference>
<dbReference type="FunFam" id="3.30.1490.20:FF:000002">
    <property type="entry name" value="Succinate--CoA ligase [ADP-forming] subunit beta"/>
    <property type="match status" value="1"/>
</dbReference>
<dbReference type="FunFam" id="3.30.470.20:FF:000002">
    <property type="entry name" value="Succinate--CoA ligase [ADP-forming] subunit beta"/>
    <property type="match status" value="1"/>
</dbReference>
<dbReference type="FunFam" id="3.40.50.261:FF:000001">
    <property type="entry name" value="Succinate--CoA ligase [ADP-forming] subunit beta"/>
    <property type="match status" value="1"/>
</dbReference>
<dbReference type="Gene3D" id="3.30.1490.20">
    <property type="entry name" value="ATP-grasp fold, A domain"/>
    <property type="match status" value="1"/>
</dbReference>
<dbReference type="Gene3D" id="3.30.470.20">
    <property type="entry name" value="ATP-grasp fold, B domain"/>
    <property type="match status" value="1"/>
</dbReference>
<dbReference type="Gene3D" id="3.40.50.261">
    <property type="entry name" value="Succinyl-CoA synthetase domains"/>
    <property type="match status" value="1"/>
</dbReference>
<dbReference type="HAMAP" id="MF_00558">
    <property type="entry name" value="Succ_CoA_beta"/>
    <property type="match status" value="1"/>
</dbReference>
<dbReference type="InterPro" id="IPR011761">
    <property type="entry name" value="ATP-grasp"/>
</dbReference>
<dbReference type="InterPro" id="IPR013650">
    <property type="entry name" value="ATP-grasp_succ-CoA_synth-type"/>
</dbReference>
<dbReference type="InterPro" id="IPR013815">
    <property type="entry name" value="ATP_grasp_subdomain_1"/>
</dbReference>
<dbReference type="InterPro" id="IPR005811">
    <property type="entry name" value="SUCC_ACL_C"/>
</dbReference>
<dbReference type="InterPro" id="IPR005809">
    <property type="entry name" value="Succ_CoA_ligase-like_bsu"/>
</dbReference>
<dbReference type="InterPro" id="IPR016102">
    <property type="entry name" value="Succinyl-CoA_synth-like"/>
</dbReference>
<dbReference type="NCBIfam" id="NF001913">
    <property type="entry name" value="PRK00696.1"/>
    <property type="match status" value="1"/>
</dbReference>
<dbReference type="NCBIfam" id="TIGR01016">
    <property type="entry name" value="sucCoAbeta"/>
    <property type="match status" value="1"/>
</dbReference>
<dbReference type="PANTHER" id="PTHR11815:SF10">
    <property type="entry name" value="SUCCINATE--COA LIGASE [GDP-FORMING] SUBUNIT BETA, MITOCHONDRIAL"/>
    <property type="match status" value="1"/>
</dbReference>
<dbReference type="PANTHER" id="PTHR11815">
    <property type="entry name" value="SUCCINYL-COA SYNTHETASE BETA CHAIN"/>
    <property type="match status" value="1"/>
</dbReference>
<dbReference type="Pfam" id="PF08442">
    <property type="entry name" value="ATP-grasp_2"/>
    <property type="match status" value="1"/>
</dbReference>
<dbReference type="Pfam" id="PF00549">
    <property type="entry name" value="Ligase_CoA"/>
    <property type="match status" value="1"/>
</dbReference>
<dbReference type="PIRSF" id="PIRSF001554">
    <property type="entry name" value="SucCS_beta"/>
    <property type="match status" value="1"/>
</dbReference>
<dbReference type="SUPFAM" id="SSF56059">
    <property type="entry name" value="Glutathione synthetase ATP-binding domain-like"/>
    <property type="match status" value="1"/>
</dbReference>
<dbReference type="SUPFAM" id="SSF52210">
    <property type="entry name" value="Succinyl-CoA synthetase domains"/>
    <property type="match status" value="1"/>
</dbReference>
<dbReference type="PROSITE" id="PS50975">
    <property type="entry name" value="ATP_GRASP"/>
    <property type="match status" value="1"/>
</dbReference>
<organism>
    <name type="scientific">Flavobacterium psychrophilum (strain ATCC 49511 / DSM 21280 / CIP 103535 / JIP02/86)</name>
    <dbReference type="NCBI Taxonomy" id="402612"/>
    <lineage>
        <taxon>Bacteria</taxon>
        <taxon>Pseudomonadati</taxon>
        <taxon>Bacteroidota</taxon>
        <taxon>Flavobacteriia</taxon>
        <taxon>Flavobacteriales</taxon>
        <taxon>Flavobacteriaceae</taxon>
        <taxon>Flavobacterium</taxon>
    </lineage>
</organism>
<evidence type="ECO:0000255" key="1">
    <source>
        <dbReference type="HAMAP-Rule" id="MF_00558"/>
    </source>
</evidence>
<keyword id="KW-0067">ATP-binding</keyword>
<keyword id="KW-0436">Ligase</keyword>
<keyword id="KW-0460">Magnesium</keyword>
<keyword id="KW-0479">Metal-binding</keyword>
<keyword id="KW-0547">Nucleotide-binding</keyword>
<keyword id="KW-1185">Reference proteome</keyword>
<keyword id="KW-0816">Tricarboxylic acid cycle</keyword>
<sequence length="398" mass="43319">MNIHEYQGKEILASYGVRIQRGIVANNPVEAVAAAKQLTTETGTSWYVVKAQVHAGGRGKGGGVKLAKNLQQVEEISEQIIGMQLITPQTSAEGKKVHKVLIAEDVYYPGESETSEFYISVLLNRSTGRNMIVYSTEGGMDIEEVAAHTPHLIHNEEIDPSVGLQAFQARRIAFNLGLSGNAFKEMVKFIDSLYNAYIGSDASMFEINPVLKTSDDKIMAVDAKVNIDDNALYRQPKYADMRDIREENPIEVEAKEVGLNYVDLDGTVGCMVNGAGLAMATMDLIKYAGFEPANFLDVGGTADAKRVETAFRIILKDENVKAILINIFGGIVRCDRVAQGVVDAYKNMGDAIKVPIIVRLQGTNAEIAKELIDNSGMPILSAVQFQEAADQVKAALSK</sequence>
<feature type="chain" id="PRO_1000082085" description="Succinate--CoA ligase [ADP-forming] subunit beta">
    <location>
        <begin position="1"/>
        <end position="398"/>
    </location>
</feature>
<feature type="domain" description="ATP-grasp" evidence="1">
    <location>
        <begin position="9"/>
        <end position="253"/>
    </location>
</feature>
<feature type="binding site" evidence="1">
    <location>
        <position position="50"/>
    </location>
    <ligand>
        <name>ATP</name>
        <dbReference type="ChEBI" id="CHEBI:30616"/>
    </ligand>
</feature>
<feature type="binding site" evidence="1">
    <location>
        <begin position="57"/>
        <end position="59"/>
    </location>
    <ligand>
        <name>ATP</name>
        <dbReference type="ChEBI" id="CHEBI:30616"/>
    </ligand>
</feature>
<feature type="binding site" evidence="1">
    <location>
        <position position="106"/>
    </location>
    <ligand>
        <name>ATP</name>
        <dbReference type="ChEBI" id="CHEBI:30616"/>
    </ligand>
</feature>
<feature type="binding site" evidence="1">
    <location>
        <position position="116"/>
    </location>
    <ligand>
        <name>ATP</name>
        <dbReference type="ChEBI" id="CHEBI:30616"/>
    </ligand>
</feature>
<feature type="binding site" evidence="1">
    <location>
        <position position="208"/>
    </location>
    <ligand>
        <name>Mg(2+)</name>
        <dbReference type="ChEBI" id="CHEBI:18420"/>
    </ligand>
</feature>
<feature type="binding site" evidence="1">
    <location>
        <position position="222"/>
    </location>
    <ligand>
        <name>Mg(2+)</name>
        <dbReference type="ChEBI" id="CHEBI:18420"/>
    </ligand>
</feature>
<feature type="binding site" evidence="1">
    <location>
        <position position="273"/>
    </location>
    <ligand>
        <name>substrate</name>
        <note>ligand shared with subunit alpha</note>
    </ligand>
</feature>
<feature type="binding site" evidence="1">
    <location>
        <begin position="330"/>
        <end position="332"/>
    </location>
    <ligand>
        <name>substrate</name>
        <note>ligand shared with subunit alpha</note>
    </ligand>
</feature>
<name>SUCC_FLAPJ</name>